<comment type="function">
    <text evidence="1">Promotes RNA polymerase assembly. Latches the N- and C-terminal regions of the beta' subunit thereby facilitating its interaction with the beta and alpha subunits.</text>
</comment>
<comment type="catalytic activity">
    <reaction evidence="1">
        <text>RNA(n) + a ribonucleoside 5'-triphosphate = RNA(n+1) + diphosphate</text>
        <dbReference type="Rhea" id="RHEA:21248"/>
        <dbReference type="Rhea" id="RHEA-COMP:14527"/>
        <dbReference type="Rhea" id="RHEA-COMP:17342"/>
        <dbReference type="ChEBI" id="CHEBI:33019"/>
        <dbReference type="ChEBI" id="CHEBI:61557"/>
        <dbReference type="ChEBI" id="CHEBI:140395"/>
        <dbReference type="EC" id="2.7.7.6"/>
    </reaction>
</comment>
<comment type="subunit">
    <text evidence="1">The RNAP catalytic core consists of 2 alpha, 1 beta, 1 beta' and 1 omega subunit. When a sigma factor is associated with the core the holoenzyme is formed, which can initiate transcription.</text>
</comment>
<comment type="similarity">
    <text evidence="1">Belongs to the RNA polymerase subunit omega family.</text>
</comment>
<dbReference type="EC" id="2.7.7.6" evidence="1"/>
<dbReference type="EMBL" id="FM178379">
    <property type="protein sequence ID" value="CAQ77896.1"/>
    <property type="molecule type" value="Genomic_DNA"/>
</dbReference>
<dbReference type="RefSeq" id="WP_012549086.1">
    <property type="nucleotide sequence ID" value="NC_011312.1"/>
</dbReference>
<dbReference type="SMR" id="B6EPJ3"/>
<dbReference type="KEGG" id="vsa:VSAL_I0211"/>
<dbReference type="eggNOG" id="COG1758">
    <property type="taxonomic scope" value="Bacteria"/>
</dbReference>
<dbReference type="HOGENOM" id="CLU_125406_5_3_6"/>
<dbReference type="Proteomes" id="UP000001730">
    <property type="component" value="Chromosome 1"/>
</dbReference>
<dbReference type="GO" id="GO:0000428">
    <property type="term" value="C:DNA-directed RNA polymerase complex"/>
    <property type="evidence" value="ECO:0007669"/>
    <property type="project" value="UniProtKB-KW"/>
</dbReference>
<dbReference type="GO" id="GO:0003677">
    <property type="term" value="F:DNA binding"/>
    <property type="evidence" value="ECO:0007669"/>
    <property type="project" value="UniProtKB-UniRule"/>
</dbReference>
<dbReference type="GO" id="GO:0003899">
    <property type="term" value="F:DNA-directed RNA polymerase activity"/>
    <property type="evidence" value="ECO:0007669"/>
    <property type="project" value="UniProtKB-UniRule"/>
</dbReference>
<dbReference type="GO" id="GO:0006351">
    <property type="term" value="P:DNA-templated transcription"/>
    <property type="evidence" value="ECO:0007669"/>
    <property type="project" value="UniProtKB-UniRule"/>
</dbReference>
<dbReference type="FunFam" id="3.90.940.10:FF:000001">
    <property type="entry name" value="DNA-directed RNA polymerase subunit omega"/>
    <property type="match status" value="1"/>
</dbReference>
<dbReference type="Gene3D" id="3.90.940.10">
    <property type="match status" value="1"/>
</dbReference>
<dbReference type="HAMAP" id="MF_00366">
    <property type="entry name" value="RNApol_bact_RpoZ"/>
    <property type="match status" value="1"/>
</dbReference>
<dbReference type="InterPro" id="IPR003716">
    <property type="entry name" value="DNA-dir_RNA_pol_omega"/>
</dbReference>
<dbReference type="InterPro" id="IPR006110">
    <property type="entry name" value="Pol_omega/Rpo6/RPB6"/>
</dbReference>
<dbReference type="InterPro" id="IPR036161">
    <property type="entry name" value="RPB6/omega-like_sf"/>
</dbReference>
<dbReference type="NCBIfam" id="TIGR00690">
    <property type="entry name" value="rpoZ"/>
    <property type="match status" value="1"/>
</dbReference>
<dbReference type="PANTHER" id="PTHR34476">
    <property type="entry name" value="DNA-DIRECTED RNA POLYMERASE SUBUNIT OMEGA"/>
    <property type="match status" value="1"/>
</dbReference>
<dbReference type="PANTHER" id="PTHR34476:SF1">
    <property type="entry name" value="DNA-DIRECTED RNA POLYMERASE SUBUNIT OMEGA"/>
    <property type="match status" value="1"/>
</dbReference>
<dbReference type="Pfam" id="PF01192">
    <property type="entry name" value="RNA_pol_Rpb6"/>
    <property type="match status" value="1"/>
</dbReference>
<dbReference type="SMART" id="SM01409">
    <property type="entry name" value="RNA_pol_Rpb6"/>
    <property type="match status" value="1"/>
</dbReference>
<dbReference type="SUPFAM" id="SSF63562">
    <property type="entry name" value="RPB6/omega subunit-like"/>
    <property type="match status" value="1"/>
</dbReference>
<reference key="1">
    <citation type="journal article" date="2008" name="BMC Genomics">
        <title>The genome sequence of the fish pathogen Aliivibrio salmonicida strain LFI1238 shows extensive evidence of gene decay.</title>
        <authorList>
            <person name="Hjerde E."/>
            <person name="Lorentzen M.S."/>
            <person name="Holden M.T."/>
            <person name="Seeger K."/>
            <person name="Paulsen S."/>
            <person name="Bason N."/>
            <person name="Churcher C."/>
            <person name="Harris D."/>
            <person name="Norbertczak H."/>
            <person name="Quail M.A."/>
            <person name="Sanders S."/>
            <person name="Thurston S."/>
            <person name="Parkhill J."/>
            <person name="Willassen N.P."/>
            <person name="Thomson N.R."/>
        </authorList>
    </citation>
    <scope>NUCLEOTIDE SEQUENCE [LARGE SCALE GENOMIC DNA]</scope>
    <source>
        <strain>LFI1238</strain>
    </source>
</reference>
<name>RPOZ_ALISL</name>
<organism>
    <name type="scientific">Aliivibrio salmonicida (strain LFI1238)</name>
    <name type="common">Vibrio salmonicida (strain LFI1238)</name>
    <dbReference type="NCBI Taxonomy" id="316275"/>
    <lineage>
        <taxon>Bacteria</taxon>
        <taxon>Pseudomonadati</taxon>
        <taxon>Pseudomonadota</taxon>
        <taxon>Gammaproteobacteria</taxon>
        <taxon>Vibrionales</taxon>
        <taxon>Vibrionaceae</taxon>
        <taxon>Aliivibrio</taxon>
    </lineage>
</organism>
<evidence type="ECO:0000255" key="1">
    <source>
        <dbReference type="HAMAP-Rule" id="MF_00366"/>
    </source>
</evidence>
<evidence type="ECO:0000256" key="2">
    <source>
        <dbReference type="SAM" id="MobiDB-lite"/>
    </source>
</evidence>
<keyword id="KW-0240">DNA-directed RNA polymerase</keyword>
<keyword id="KW-0548">Nucleotidyltransferase</keyword>
<keyword id="KW-0804">Transcription</keyword>
<keyword id="KW-0808">Transferase</keyword>
<protein>
    <recommendedName>
        <fullName evidence="1">DNA-directed RNA polymerase subunit omega</fullName>
        <shortName evidence="1">RNAP omega subunit</shortName>
        <ecNumber evidence="1">2.7.7.6</ecNumber>
    </recommendedName>
    <alternativeName>
        <fullName evidence="1">RNA polymerase omega subunit</fullName>
    </alternativeName>
    <alternativeName>
        <fullName evidence="1">Transcriptase subunit omega</fullName>
    </alternativeName>
</protein>
<sequence length="90" mass="10082">MARVTVQDTVEKIGNRFDLVLVSSRRARQLQTGGKDALVPEENDKPTVIALREIEEGLITKDLLDARERQEQQEQDAAELAAVSSITHNR</sequence>
<feature type="chain" id="PRO_1000121183" description="DNA-directed RNA polymerase subunit omega">
    <location>
        <begin position="1"/>
        <end position="90"/>
    </location>
</feature>
<feature type="region of interest" description="Disordered" evidence="2">
    <location>
        <begin position="69"/>
        <end position="90"/>
    </location>
</feature>
<gene>
    <name evidence="1" type="primary">rpoZ</name>
    <name type="ordered locus">VSAL_I0211</name>
</gene>
<accession>B6EPJ3</accession>
<proteinExistence type="inferred from homology"/>